<feature type="chain" id="PRO_0000237758" description="2-C-methyl-D-erythritol 2,4-cyclodiphosphate synthase">
    <location>
        <begin position="1"/>
        <end position="160"/>
    </location>
</feature>
<feature type="binding site" evidence="1">
    <location>
        <begin position="11"/>
        <end position="13"/>
    </location>
    <ligand>
        <name>4-CDP-2-C-methyl-D-erythritol 2-phosphate</name>
        <dbReference type="ChEBI" id="CHEBI:57919"/>
    </ligand>
</feature>
<feature type="binding site" evidence="1">
    <location>
        <position position="11"/>
    </location>
    <ligand>
        <name>a divalent metal cation</name>
        <dbReference type="ChEBI" id="CHEBI:60240"/>
    </ligand>
</feature>
<feature type="binding site" evidence="1">
    <location>
        <position position="13"/>
    </location>
    <ligand>
        <name>a divalent metal cation</name>
        <dbReference type="ChEBI" id="CHEBI:60240"/>
    </ligand>
</feature>
<feature type="binding site" evidence="1">
    <location>
        <begin position="37"/>
        <end position="38"/>
    </location>
    <ligand>
        <name>4-CDP-2-C-methyl-D-erythritol 2-phosphate</name>
        <dbReference type="ChEBI" id="CHEBI:57919"/>
    </ligand>
</feature>
<feature type="binding site" evidence="1">
    <location>
        <position position="45"/>
    </location>
    <ligand>
        <name>a divalent metal cation</name>
        <dbReference type="ChEBI" id="CHEBI:60240"/>
    </ligand>
</feature>
<feature type="binding site" evidence="1">
    <location>
        <begin position="59"/>
        <end position="61"/>
    </location>
    <ligand>
        <name>4-CDP-2-C-methyl-D-erythritol 2-phosphate</name>
        <dbReference type="ChEBI" id="CHEBI:57919"/>
    </ligand>
</feature>
<feature type="binding site" evidence="1">
    <location>
        <begin position="135"/>
        <end position="138"/>
    </location>
    <ligand>
        <name>4-CDP-2-C-methyl-D-erythritol 2-phosphate</name>
        <dbReference type="ChEBI" id="CHEBI:57919"/>
    </ligand>
</feature>
<feature type="binding site" evidence="1">
    <location>
        <position position="145"/>
    </location>
    <ligand>
        <name>4-CDP-2-C-methyl-D-erythritol 2-phosphate</name>
        <dbReference type="ChEBI" id="CHEBI:57919"/>
    </ligand>
</feature>
<feature type="site" description="Transition state stabilizer" evidence="1">
    <location>
        <position position="37"/>
    </location>
</feature>
<feature type="site" description="Transition state stabilizer" evidence="1">
    <location>
        <position position="136"/>
    </location>
</feature>
<reference key="1">
    <citation type="journal article" date="2007" name="Photosyn. Res.">
        <title>Complete nucleotide sequence of the freshwater unicellular cyanobacterium Synechococcus elongatus PCC 6301 chromosome: gene content and organization.</title>
        <authorList>
            <person name="Sugita C."/>
            <person name="Ogata K."/>
            <person name="Shikata M."/>
            <person name="Jikuya H."/>
            <person name="Takano J."/>
            <person name="Furumichi M."/>
            <person name="Kanehisa M."/>
            <person name="Omata T."/>
            <person name="Sugiura M."/>
            <person name="Sugita M."/>
        </authorList>
    </citation>
    <scope>NUCLEOTIDE SEQUENCE [LARGE SCALE GENOMIC DNA]</scope>
    <source>
        <strain>ATCC 27144 / PCC 6301 / SAUG 1402/1</strain>
    </source>
</reference>
<keyword id="KW-0414">Isoprene biosynthesis</keyword>
<keyword id="KW-0456">Lyase</keyword>
<keyword id="KW-0479">Metal-binding</keyword>
<accession>Q5N549</accession>
<proteinExistence type="inferred from homology"/>
<comment type="function">
    <text evidence="1">Involved in the biosynthesis of isopentenyl diphosphate (IPP) and dimethylallyl diphosphate (DMAPP), two major building blocks of isoprenoid compounds. Catalyzes the conversion of 4-diphosphocytidyl-2-C-methyl-D-erythritol 2-phosphate (CDP-ME2P) to 2-C-methyl-D-erythritol 2,4-cyclodiphosphate (ME-CPP) with a corresponding release of cytidine 5-monophosphate (CMP).</text>
</comment>
<comment type="catalytic activity">
    <reaction evidence="1">
        <text>4-CDP-2-C-methyl-D-erythritol 2-phosphate = 2-C-methyl-D-erythritol 2,4-cyclic diphosphate + CMP</text>
        <dbReference type="Rhea" id="RHEA:23864"/>
        <dbReference type="ChEBI" id="CHEBI:57919"/>
        <dbReference type="ChEBI" id="CHEBI:58483"/>
        <dbReference type="ChEBI" id="CHEBI:60377"/>
        <dbReference type="EC" id="4.6.1.12"/>
    </reaction>
</comment>
<comment type="cofactor">
    <cofactor evidence="1">
        <name>a divalent metal cation</name>
        <dbReference type="ChEBI" id="CHEBI:60240"/>
    </cofactor>
    <text evidence="1">Binds 1 divalent metal cation per subunit.</text>
</comment>
<comment type="pathway">
    <text evidence="1">Isoprenoid biosynthesis; isopentenyl diphosphate biosynthesis via DXP pathway; isopentenyl diphosphate from 1-deoxy-D-xylulose 5-phosphate: step 4/6.</text>
</comment>
<comment type="subunit">
    <text evidence="1">Homotrimer.</text>
</comment>
<comment type="similarity">
    <text evidence="1">Belongs to the IspF family.</text>
</comment>
<name>ISPF_SYNP6</name>
<evidence type="ECO:0000255" key="1">
    <source>
        <dbReference type="HAMAP-Rule" id="MF_00107"/>
    </source>
</evidence>
<organism>
    <name type="scientific">Synechococcus sp. (strain ATCC 27144 / PCC 6301 / SAUG 1402/1)</name>
    <name type="common">Anacystis nidulans</name>
    <dbReference type="NCBI Taxonomy" id="269084"/>
    <lineage>
        <taxon>Bacteria</taxon>
        <taxon>Bacillati</taxon>
        <taxon>Cyanobacteriota</taxon>
        <taxon>Cyanophyceae</taxon>
        <taxon>Synechococcales</taxon>
        <taxon>Synechococcaceae</taxon>
        <taxon>Synechococcus</taxon>
    </lineage>
</organism>
<gene>
    <name evidence="1" type="primary">ispF</name>
    <name type="ordered locus">syc0380_d</name>
</gene>
<dbReference type="EC" id="4.6.1.12" evidence="1"/>
<dbReference type="EMBL" id="AP008231">
    <property type="protein sequence ID" value="BAD78570.1"/>
    <property type="molecule type" value="Genomic_DNA"/>
</dbReference>
<dbReference type="RefSeq" id="WP_011242692.1">
    <property type="nucleotide sequence ID" value="NZ_CP085785.1"/>
</dbReference>
<dbReference type="SMR" id="Q5N549"/>
<dbReference type="GeneID" id="72430028"/>
<dbReference type="KEGG" id="syc:syc0380_d"/>
<dbReference type="eggNOG" id="COG0245">
    <property type="taxonomic scope" value="Bacteria"/>
</dbReference>
<dbReference type="UniPathway" id="UPA00056">
    <property type="reaction ID" value="UER00095"/>
</dbReference>
<dbReference type="Proteomes" id="UP000001175">
    <property type="component" value="Chromosome"/>
</dbReference>
<dbReference type="GO" id="GO:0008685">
    <property type="term" value="F:2-C-methyl-D-erythritol 2,4-cyclodiphosphate synthase activity"/>
    <property type="evidence" value="ECO:0007669"/>
    <property type="project" value="UniProtKB-UniRule"/>
</dbReference>
<dbReference type="GO" id="GO:0046872">
    <property type="term" value="F:metal ion binding"/>
    <property type="evidence" value="ECO:0007669"/>
    <property type="project" value="UniProtKB-KW"/>
</dbReference>
<dbReference type="GO" id="GO:0019288">
    <property type="term" value="P:isopentenyl diphosphate biosynthetic process, methylerythritol 4-phosphate pathway"/>
    <property type="evidence" value="ECO:0007669"/>
    <property type="project" value="UniProtKB-UniRule"/>
</dbReference>
<dbReference type="GO" id="GO:0016114">
    <property type="term" value="P:terpenoid biosynthetic process"/>
    <property type="evidence" value="ECO:0007669"/>
    <property type="project" value="InterPro"/>
</dbReference>
<dbReference type="CDD" id="cd00554">
    <property type="entry name" value="MECDP_synthase"/>
    <property type="match status" value="1"/>
</dbReference>
<dbReference type="FunFam" id="3.30.1330.50:FF:000001">
    <property type="entry name" value="2-C-methyl-D-erythritol 2,4-cyclodiphosphate synthase"/>
    <property type="match status" value="1"/>
</dbReference>
<dbReference type="Gene3D" id="3.30.1330.50">
    <property type="entry name" value="2-C-methyl-D-erythritol 2,4-cyclodiphosphate synthase"/>
    <property type="match status" value="1"/>
</dbReference>
<dbReference type="HAMAP" id="MF_00107">
    <property type="entry name" value="IspF"/>
    <property type="match status" value="1"/>
</dbReference>
<dbReference type="InterPro" id="IPR003526">
    <property type="entry name" value="MECDP_synthase"/>
</dbReference>
<dbReference type="InterPro" id="IPR020555">
    <property type="entry name" value="MECDP_synthase_CS"/>
</dbReference>
<dbReference type="InterPro" id="IPR036571">
    <property type="entry name" value="MECDP_synthase_sf"/>
</dbReference>
<dbReference type="NCBIfam" id="TIGR00151">
    <property type="entry name" value="ispF"/>
    <property type="match status" value="1"/>
</dbReference>
<dbReference type="PANTHER" id="PTHR43181">
    <property type="entry name" value="2-C-METHYL-D-ERYTHRITOL 2,4-CYCLODIPHOSPHATE SYNTHASE, CHLOROPLASTIC"/>
    <property type="match status" value="1"/>
</dbReference>
<dbReference type="PANTHER" id="PTHR43181:SF1">
    <property type="entry name" value="2-C-METHYL-D-ERYTHRITOL 2,4-CYCLODIPHOSPHATE SYNTHASE, CHLOROPLASTIC"/>
    <property type="match status" value="1"/>
</dbReference>
<dbReference type="Pfam" id="PF02542">
    <property type="entry name" value="YgbB"/>
    <property type="match status" value="1"/>
</dbReference>
<dbReference type="SUPFAM" id="SSF69765">
    <property type="entry name" value="IpsF-like"/>
    <property type="match status" value="1"/>
</dbReference>
<dbReference type="PROSITE" id="PS01350">
    <property type="entry name" value="ISPF"/>
    <property type="match status" value="1"/>
</dbReference>
<protein>
    <recommendedName>
        <fullName evidence="1">2-C-methyl-D-erythritol 2,4-cyclodiphosphate synthase</fullName>
        <shortName evidence="1">MECDP-synthase</shortName>
        <shortName evidence="1">MECPP-synthase</shortName>
        <shortName evidence="1">MECPS</shortName>
        <ecNumber evidence="1">4.6.1.12</ecNumber>
    </recommendedName>
</protein>
<sequence length="160" mass="17431">MSRFRIGNGYDIHRLVEGRPLILGGIQLEHSLGLDGHSDADVLTHAIMDALLGALSLGDIGHYFPPTDPQWKGADSLKLLAQVNQLIRDRGWTIGNLDSVVVAEQPKLKPHIAAMRDRLAKVLELEPDQIGIKATTNEKLGPTGREEGICAYAVALLVRD</sequence>